<protein>
    <recommendedName>
        <fullName evidence="2">Cytochrome f</fullName>
    </recommendedName>
</protein>
<evidence type="ECO:0000250" key="1"/>
<evidence type="ECO:0000255" key="2">
    <source>
        <dbReference type="HAMAP-Rule" id="MF_00610"/>
    </source>
</evidence>
<geneLocation type="chloroplast"/>
<accession>Q09G33</accession>
<comment type="function">
    <text evidence="2">Component of the cytochrome b6-f complex, which mediates electron transfer between photosystem II (PSII) and photosystem I (PSI), cyclic electron flow around PSI, and state transitions.</text>
</comment>
<comment type="cofactor">
    <cofactor evidence="2">
        <name>heme</name>
        <dbReference type="ChEBI" id="CHEBI:30413"/>
    </cofactor>
    <text evidence="2">Binds 1 heme group covalently.</text>
</comment>
<comment type="subunit">
    <text evidence="1">The 4 large subunits of the cytochrome b6-f complex are cytochrome b6, subunit IV (17 kDa polypeptide, petD), cytochrome f and the Rieske protein, while the 4 small subunits are PetG, PetL, PetM and PetN. The complex functions as a dimer (By similarity).</text>
</comment>
<comment type="subcellular location">
    <subcellularLocation>
        <location evidence="2">Plastid</location>
        <location evidence="2">Chloroplast thylakoid membrane</location>
        <topology evidence="2">Single-pass membrane protein</topology>
    </subcellularLocation>
</comment>
<comment type="similarity">
    <text evidence="2">Belongs to the cytochrome f family.</text>
</comment>
<reference key="1">
    <citation type="journal article" date="2006" name="BMC Plant Biol.">
        <title>Rapid and accurate pyrosequencing of angiosperm plastid genomes.</title>
        <authorList>
            <person name="Moore M.J."/>
            <person name="Dhingra A."/>
            <person name="Soltis P.S."/>
            <person name="Shaw R."/>
            <person name="Farmerie W.G."/>
            <person name="Folta K.M."/>
            <person name="Soltis D.E."/>
        </authorList>
    </citation>
    <scope>NUCLEOTIDE SEQUENCE [LARGE SCALE GENOMIC DNA]</scope>
</reference>
<feature type="signal peptide" evidence="2">
    <location>
        <begin position="1"/>
        <end position="35"/>
    </location>
</feature>
<feature type="chain" id="PRO_0000342081" description="Cytochrome f">
    <location>
        <begin position="36"/>
        <end position="320"/>
    </location>
</feature>
<feature type="transmembrane region" description="Helical" evidence="2">
    <location>
        <begin position="286"/>
        <end position="306"/>
    </location>
</feature>
<feature type="binding site" description="axial binding residue" evidence="2">
    <location>
        <position position="36"/>
    </location>
    <ligand>
        <name>heme</name>
        <dbReference type="ChEBI" id="CHEBI:30413"/>
    </ligand>
    <ligandPart>
        <name>Fe</name>
        <dbReference type="ChEBI" id="CHEBI:18248"/>
    </ligandPart>
</feature>
<feature type="binding site" description="covalent" evidence="2">
    <location>
        <position position="56"/>
    </location>
    <ligand>
        <name>heme</name>
        <dbReference type="ChEBI" id="CHEBI:30413"/>
    </ligand>
</feature>
<feature type="binding site" description="covalent" evidence="2">
    <location>
        <position position="59"/>
    </location>
    <ligand>
        <name>heme</name>
        <dbReference type="ChEBI" id="CHEBI:30413"/>
    </ligand>
</feature>
<feature type="binding site" description="axial binding residue" evidence="2">
    <location>
        <position position="60"/>
    </location>
    <ligand>
        <name>heme</name>
        <dbReference type="ChEBI" id="CHEBI:30413"/>
    </ligand>
    <ligandPart>
        <name>Fe</name>
        <dbReference type="ChEBI" id="CHEBI:18248"/>
    </ligandPart>
</feature>
<proteinExistence type="inferred from homology"/>
<sequence>MQNRNTFSWIKEQMTRSISVSIMIYVITRTAISNAYPIFAQQGYENPREATGRIVCANCHLANKPVDIEVPQAVLPDTVFEAVVRIPYDMQVKQVLANGKKGALNVGAVLILPEGFELAPPDRISPEMKEKIGKLSFQSYRPTKKNILVIGPVPGQKYSEITFPILSPDPATKKDVHFLKYPIYVGGNRGRGQIYPDGSKSNNTVYNATAAGIISKIVRKEKGGYEISIADASDGHQVVDIIPPGPELLVSEGESIKLDQPLTSNPNVGGFGQGDAEIVLQDPLRVQGLLFFLASVILAQIFLVLKKKQFEKVQLSEMNF</sequence>
<name>CYF_PLAOC</name>
<gene>
    <name evidence="2" type="primary">petA</name>
</gene>
<organism>
    <name type="scientific">Platanus occidentalis</name>
    <name type="common">Sycamore</name>
    <name type="synonym">American plane tree</name>
    <dbReference type="NCBI Taxonomy" id="4403"/>
    <lineage>
        <taxon>Eukaryota</taxon>
        <taxon>Viridiplantae</taxon>
        <taxon>Streptophyta</taxon>
        <taxon>Embryophyta</taxon>
        <taxon>Tracheophyta</taxon>
        <taxon>Spermatophyta</taxon>
        <taxon>Magnoliopsida</taxon>
        <taxon>Proteales</taxon>
        <taxon>Platanaceae</taxon>
        <taxon>Platanus</taxon>
    </lineage>
</organism>
<dbReference type="EMBL" id="DQ923116">
    <property type="protein sequence ID" value="ABI49791.1"/>
    <property type="molecule type" value="Genomic_DNA"/>
</dbReference>
<dbReference type="RefSeq" id="YP_740578.1">
    <property type="nucleotide sequence ID" value="NC_008335.1"/>
</dbReference>
<dbReference type="SMR" id="Q09G33"/>
<dbReference type="GeneID" id="4271303"/>
<dbReference type="GO" id="GO:0009535">
    <property type="term" value="C:chloroplast thylakoid membrane"/>
    <property type="evidence" value="ECO:0007669"/>
    <property type="project" value="UniProtKB-SubCell"/>
</dbReference>
<dbReference type="GO" id="GO:0009055">
    <property type="term" value="F:electron transfer activity"/>
    <property type="evidence" value="ECO:0007669"/>
    <property type="project" value="UniProtKB-UniRule"/>
</dbReference>
<dbReference type="GO" id="GO:0020037">
    <property type="term" value="F:heme binding"/>
    <property type="evidence" value="ECO:0007669"/>
    <property type="project" value="InterPro"/>
</dbReference>
<dbReference type="GO" id="GO:0005506">
    <property type="term" value="F:iron ion binding"/>
    <property type="evidence" value="ECO:0007669"/>
    <property type="project" value="InterPro"/>
</dbReference>
<dbReference type="GO" id="GO:0015979">
    <property type="term" value="P:photosynthesis"/>
    <property type="evidence" value="ECO:0007669"/>
    <property type="project" value="UniProtKB-UniRule"/>
</dbReference>
<dbReference type="FunFam" id="1.20.5.700:FF:000001">
    <property type="entry name" value="Cytochrome f"/>
    <property type="match status" value="1"/>
</dbReference>
<dbReference type="FunFam" id="2.40.50.100:FF:000007">
    <property type="entry name" value="Cytochrome f"/>
    <property type="match status" value="1"/>
</dbReference>
<dbReference type="FunFam" id="2.60.40.830:FF:000001">
    <property type="entry name" value="Cytochrome f"/>
    <property type="match status" value="1"/>
</dbReference>
<dbReference type="Gene3D" id="2.40.50.100">
    <property type="match status" value="1"/>
</dbReference>
<dbReference type="Gene3D" id="2.60.40.830">
    <property type="entry name" value="Cytochrome f large domain"/>
    <property type="match status" value="1"/>
</dbReference>
<dbReference type="Gene3D" id="1.20.5.700">
    <property type="entry name" value="Single helix bin"/>
    <property type="match status" value="1"/>
</dbReference>
<dbReference type="HAMAP" id="MF_00610">
    <property type="entry name" value="Cytb6_f_cytF"/>
    <property type="match status" value="1"/>
</dbReference>
<dbReference type="InterPro" id="IPR024058">
    <property type="entry name" value="Cyt-f_TM"/>
</dbReference>
<dbReference type="InterPro" id="IPR002325">
    <property type="entry name" value="Cyt_f"/>
</dbReference>
<dbReference type="InterPro" id="IPR024094">
    <property type="entry name" value="Cyt_f_lg_dom"/>
</dbReference>
<dbReference type="InterPro" id="IPR036826">
    <property type="entry name" value="Cyt_f_lg_dom_sf"/>
</dbReference>
<dbReference type="InterPro" id="IPR011054">
    <property type="entry name" value="Rudment_hybrid_motif"/>
</dbReference>
<dbReference type="PANTHER" id="PTHR33288">
    <property type="match status" value="1"/>
</dbReference>
<dbReference type="PANTHER" id="PTHR33288:SF10">
    <property type="entry name" value="CYTOCHROME F"/>
    <property type="match status" value="1"/>
</dbReference>
<dbReference type="Pfam" id="PF01333">
    <property type="entry name" value="Apocytochr_F_C"/>
    <property type="match status" value="1"/>
</dbReference>
<dbReference type="Pfam" id="PF16639">
    <property type="entry name" value="Apocytochr_F_N"/>
    <property type="match status" value="1"/>
</dbReference>
<dbReference type="PRINTS" id="PR00610">
    <property type="entry name" value="CYTOCHROMEF"/>
</dbReference>
<dbReference type="SUPFAM" id="SSF103431">
    <property type="entry name" value="Cytochrome f subunit of the cytochrome b6f complex, transmembrane anchor"/>
    <property type="match status" value="1"/>
</dbReference>
<dbReference type="SUPFAM" id="SSF49441">
    <property type="entry name" value="Cytochrome f, large domain"/>
    <property type="match status" value="1"/>
</dbReference>
<dbReference type="SUPFAM" id="SSF51246">
    <property type="entry name" value="Rudiment single hybrid motif"/>
    <property type="match status" value="1"/>
</dbReference>
<dbReference type="PROSITE" id="PS51010">
    <property type="entry name" value="CYTF"/>
    <property type="match status" value="1"/>
</dbReference>
<keyword id="KW-0150">Chloroplast</keyword>
<keyword id="KW-0249">Electron transport</keyword>
<keyword id="KW-0349">Heme</keyword>
<keyword id="KW-0408">Iron</keyword>
<keyword id="KW-0472">Membrane</keyword>
<keyword id="KW-0479">Metal-binding</keyword>
<keyword id="KW-0602">Photosynthesis</keyword>
<keyword id="KW-0934">Plastid</keyword>
<keyword id="KW-0732">Signal</keyword>
<keyword id="KW-0793">Thylakoid</keyword>
<keyword id="KW-0812">Transmembrane</keyword>
<keyword id="KW-1133">Transmembrane helix</keyword>
<keyword id="KW-0813">Transport</keyword>